<proteinExistence type="inferred from homology"/>
<name>DPY20_CAEBR</name>
<accession>P51558</accession>
<accession>A8X0X7</accession>
<accession>Q61SP5</accession>
<sequence length="439" mass="49650">MDGHSNTSVILHTYQQQQSQLIPSIIPQTLPDGYGLTTTISQPDFSGTNAFINTNPWNTTTFPTYRDNQYTNEVSVLNYPTVYDDFSKESTAGTLSDPSLHGSNSSSSTSDVGSSVDCSISPEPILMPCVKRGRPTENPCWAYFHRIDDQLVKCRLCTKVVRSACATNMTKHLERHHTDDYQKVTGQLKLFRMNDAGIRSKMHYQVADTPLTPIPVLPNSYVLPKMDPMEAFDASQYYTMQPDSTAINAQPFPQFDQPQTSADSQTWPLTHFWPNGAQNNMMPQLGEPSTSAIGASVIQEIRKLNLDSDQKRLELEMDQNRRLLLAQKADEKGRVVKTTTKPYQKRNRKTEHPVWAFFKRTGDGNAECIICQGVVKSPCSSNFMRHLMRHHSTEYNDVYLKWIEKRNVTHPGIHCTSVPPPISFPNKDNVRTEPIFTVK</sequence>
<feature type="chain" id="PRO_0000079994" description="Protein dumpy-20">
    <location>
        <begin position="1"/>
        <end position="439"/>
    </location>
</feature>
<feature type="zinc finger region" description="BED-type 1" evidence="2">
    <location>
        <begin position="135"/>
        <end position="184"/>
    </location>
</feature>
<feature type="zinc finger region" description="BED-type 2" evidence="2">
    <location>
        <begin position="349"/>
        <end position="398"/>
    </location>
</feature>
<feature type="region of interest" description="Disordered" evidence="3">
    <location>
        <begin position="93"/>
        <end position="116"/>
    </location>
</feature>
<feature type="compositionally biased region" description="Low complexity" evidence="3">
    <location>
        <begin position="96"/>
        <end position="116"/>
    </location>
</feature>
<feature type="binding site" evidence="2">
    <location>
        <position position="154"/>
    </location>
    <ligand>
        <name>Zn(2+)</name>
        <dbReference type="ChEBI" id="CHEBI:29105"/>
        <label>1</label>
    </ligand>
</feature>
<feature type="binding site" evidence="2">
    <location>
        <position position="157"/>
    </location>
    <ligand>
        <name>Zn(2+)</name>
        <dbReference type="ChEBI" id="CHEBI:29105"/>
        <label>1</label>
    </ligand>
</feature>
<feature type="binding site" evidence="2">
    <location>
        <position position="172"/>
    </location>
    <ligand>
        <name>Zn(2+)</name>
        <dbReference type="ChEBI" id="CHEBI:29105"/>
        <label>1</label>
    </ligand>
</feature>
<feature type="binding site" evidence="2">
    <location>
        <position position="177"/>
    </location>
    <ligand>
        <name>Zn(2+)</name>
        <dbReference type="ChEBI" id="CHEBI:29105"/>
        <label>1</label>
    </ligand>
</feature>
<feature type="binding site" evidence="2">
    <location>
        <position position="368"/>
    </location>
    <ligand>
        <name>Zn(2+)</name>
        <dbReference type="ChEBI" id="CHEBI:29105"/>
        <label>2</label>
    </ligand>
</feature>
<feature type="binding site" evidence="2">
    <location>
        <position position="371"/>
    </location>
    <ligand>
        <name>Zn(2+)</name>
        <dbReference type="ChEBI" id="CHEBI:29105"/>
        <label>2</label>
    </ligand>
</feature>
<feature type="binding site" evidence="2">
    <location>
        <position position="386"/>
    </location>
    <ligand>
        <name>Zn(2+)</name>
        <dbReference type="ChEBI" id="CHEBI:29105"/>
        <label>2</label>
    </ligand>
</feature>
<feature type="binding site" evidence="2">
    <location>
        <position position="391"/>
    </location>
    <ligand>
        <name>Zn(2+)</name>
        <dbReference type="ChEBI" id="CHEBI:29105"/>
        <label>2</label>
    </ligand>
</feature>
<organism>
    <name type="scientific">Caenorhabditis briggsae</name>
    <dbReference type="NCBI Taxonomy" id="6238"/>
    <lineage>
        <taxon>Eukaryota</taxon>
        <taxon>Metazoa</taxon>
        <taxon>Ecdysozoa</taxon>
        <taxon>Nematoda</taxon>
        <taxon>Chromadorea</taxon>
        <taxon>Rhabditida</taxon>
        <taxon>Rhabditina</taxon>
        <taxon>Rhabditomorpha</taxon>
        <taxon>Rhabditoidea</taxon>
        <taxon>Rhabditidae</taxon>
        <taxon>Peloderinae</taxon>
        <taxon>Caenorhabditis</taxon>
    </lineage>
</organism>
<evidence type="ECO:0000250" key="1"/>
<evidence type="ECO:0000255" key="2">
    <source>
        <dbReference type="PROSITE-ProRule" id="PRU00027"/>
    </source>
</evidence>
<evidence type="ECO:0000256" key="3">
    <source>
        <dbReference type="SAM" id="MobiDB-lite"/>
    </source>
</evidence>
<comment type="function">
    <text evidence="1">Involved in cuticle function and is essential for normal morphological development.</text>
</comment>
<protein>
    <recommendedName>
        <fullName>Protein dumpy-20</fullName>
    </recommendedName>
</protein>
<gene>
    <name type="primary">dpy-20</name>
    <name type="ORF">CBG06089</name>
</gene>
<reference key="1">
    <citation type="journal article" date="2003" name="PLoS Biol.">
        <title>The genome sequence of Caenorhabditis briggsae: a platform for comparative genomics.</title>
        <authorList>
            <person name="Stein L.D."/>
            <person name="Bao Z."/>
            <person name="Blasiar D."/>
            <person name="Blumenthal T."/>
            <person name="Brent M.R."/>
            <person name="Chen N."/>
            <person name="Chinwalla A."/>
            <person name="Clarke L."/>
            <person name="Clee C."/>
            <person name="Coghlan A."/>
            <person name="Coulson A."/>
            <person name="D'Eustachio P."/>
            <person name="Fitch D.H.A."/>
            <person name="Fulton L.A."/>
            <person name="Fulton R.E."/>
            <person name="Griffiths-Jones S."/>
            <person name="Harris T.W."/>
            <person name="Hillier L.W."/>
            <person name="Kamath R."/>
            <person name="Kuwabara P.E."/>
            <person name="Mardis E.R."/>
            <person name="Marra M.A."/>
            <person name="Miner T.L."/>
            <person name="Minx P."/>
            <person name="Mullikin J.C."/>
            <person name="Plumb R.W."/>
            <person name="Rogers J."/>
            <person name="Schein J.E."/>
            <person name="Sohrmann M."/>
            <person name="Spieth J."/>
            <person name="Stajich J.E."/>
            <person name="Wei C."/>
            <person name="Willey D."/>
            <person name="Wilson R.K."/>
            <person name="Durbin R.M."/>
            <person name="Waterston R.H."/>
        </authorList>
    </citation>
    <scope>NUCLEOTIDE SEQUENCE [LARGE SCALE GENOMIC DNA]</scope>
    <source>
        <strain>AF16</strain>
    </source>
</reference>
<reference key="2">
    <citation type="journal article" date="1995" name="Mol. Gen. Genet.">
        <title>Molecular cloning and characterization of the dpy-20 gene of Caenorhabditis elegans.</title>
        <authorList>
            <person name="Clark D.V."/>
            <person name="Suleman D.S."/>
            <person name="Beckenbach K.A."/>
            <person name="Gilchrist E.J."/>
            <person name="Baillie D.L."/>
        </authorList>
    </citation>
    <scope>NUCLEOTIDE SEQUENCE [GENOMIC DNA] OF 1-22</scope>
</reference>
<keyword id="KW-0193">Cuticle</keyword>
<keyword id="KW-0479">Metal-binding</keyword>
<keyword id="KW-1185">Reference proteome</keyword>
<keyword id="KW-0677">Repeat</keyword>
<keyword id="KW-0862">Zinc</keyword>
<keyword id="KW-0863">Zinc-finger</keyword>
<dbReference type="EMBL" id="HE600986">
    <property type="protein sequence ID" value="CAP26287.1"/>
    <property type="molecule type" value="Genomic_DNA"/>
</dbReference>
<dbReference type="FunCoup" id="P51558">
    <property type="interactions" value="1186"/>
</dbReference>
<dbReference type="STRING" id="6238.P51558"/>
<dbReference type="EnsemblMetazoa" id="CBG06089.1">
    <property type="protein sequence ID" value="CBG06089.1"/>
    <property type="gene ID" value="WBGene00028421"/>
</dbReference>
<dbReference type="KEGG" id="cbr:CBG_06089"/>
<dbReference type="CTD" id="8575343"/>
<dbReference type="WormBase" id="CBG06089">
    <property type="protein sequence ID" value="CBP21693"/>
    <property type="gene ID" value="WBGene00028421"/>
    <property type="gene designation" value="Cbr-dpy-20"/>
</dbReference>
<dbReference type="eggNOG" id="ENOG502TGV1">
    <property type="taxonomic scope" value="Eukaryota"/>
</dbReference>
<dbReference type="HOGENOM" id="CLU_681947_0_0_1"/>
<dbReference type="InParanoid" id="P51558"/>
<dbReference type="OMA" id="THPGIHC"/>
<dbReference type="Proteomes" id="UP000008549">
    <property type="component" value="Unassembled WGS sequence"/>
</dbReference>
<dbReference type="GO" id="GO:0005634">
    <property type="term" value="C:nucleus"/>
    <property type="evidence" value="ECO:0000318"/>
    <property type="project" value="GO_Central"/>
</dbReference>
<dbReference type="GO" id="GO:0003677">
    <property type="term" value="F:DNA binding"/>
    <property type="evidence" value="ECO:0007669"/>
    <property type="project" value="InterPro"/>
</dbReference>
<dbReference type="GO" id="GO:0042302">
    <property type="term" value="F:structural constituent of cuticle"/>
    <property type="evidence" value="ECO:0007669"/>
    <property type="project" value="UniProtKB-KW"/>
</dbReference>
<dbReference type="GO" id="GO:0008270">
    <property type="term" value="F:zinc ion binding"/>
    <property type="evidence" value="ECO:0007669"/>
    <property type="project" value="UniProtKB-KW"/>
</dbReference>
<dbReference type="GO" id="GO:0006357">
    <property type="term" value="P:regulation of transcription by RNA polymerase II"/>
    <property type="evidence" value="ECO:0000318"/>
    <property type="project" value="GO_Central"/>
</dbReference>
<dbReference type="InterPro" id="IPR053031">
    <property type="entry name" value="Cuticle_assoc_protein"/>
</dbReference>
<dbReference type="InterPro" id="IPR003656">
    <property type="entry name" value="Znf_BED"/>
</dbReference>
<dbReference type="InterPro" id="IPR036236">
    <property type="entry name" value="Znf_C2H2_sf"/>
</dbReference>
<dbReference type="PANTHER" id="PTHR34396:SF25">
    <property type="entry name" value="BOUNDARY ELEMENT ASSOCIATED FACTOR"/>
    <property type="match status" value="1"/>
</dbReference>
<dbReference type="PANTHER" id="PTHR34396">
    <property type="entry name" value="OS03G0264950 PROTEIN-RELATED"/>
    <property type="match status" value="1"/>
</dbReference>
<dbReference type="Pfam" id="PF02892">
    <property type="entry name" value="zf-BED"/>
    <property type="match status" value="2"/>
</dbReference>
<dbReference type="SMART" id="SM00614">
    <property type="entry name" value="ZnF_BED"/>
    <property type="match status" value="2"/>
</dbReference>
<dbReference type="SUPFAM" id="SSF57667">
    <property type="entry name" value="beta-beta-alpha zinc fingers"/>
    <property type="match status" value="2"/>
</dbReference>
<dbReference type="PROSITE" id="PS50808">
    <property type="entry name" value="ZF_BED"/>
    <property type="match status" value="2"/>
</dbReference>